<evidence type="ECO:0000255" key="1">
    <source>
        <dbReference type="HAMAP-Rule" id="MF_01405"/>
    </source>
</evidence>
<proteinExistence type="inferred from homology"/>
<keyword id="KW-0378">Hydrolase</keyword>
<keyword id="KW-0460">Magnesium</keyword>
<keyword id="KW-0479">Metal-binding</keyword>
<keyword id="KW-0546">Nucleotide metabolism</keyword>
<keyword id="KW-0547">Nucleotide-binding</keyword>
<keyword id="KW-1185">Reference proteome</keyword>
<gene>
    <name type="ordered locus">MYPE5240</name>
</gene>
<sequence>MKIILATQNKRKLDEFIELSKNSNYPINFVIKPLKEDIGEIEENGNSYFENALIKANAVFNYYKEPVLSDDSGLELPEFKEILGIYSSRFAGINATDKENRYKLLDYLKSKNITETSAKYVCVLVYIFNQGEALSFKGEWEGKIIVSDNLNLDTGFGYDPMFVPKEYTITVSEMSISEKNLISHRAKAVNQFLNFLKDKK</sequence>
<dbReference type="EC" id="3.6.1.66" evidence="1"/>
<dbReference type="EMBL" id="BA000026">
    <property type="protein sequence ID" value="BAC44314.1"/>
    <property type="molecule type" value="Genomic_DNA"/>
</dbReference>
<dbReference type="RefSeq" id="WP_011077348.1">
    <property type="nucleotide sequence ID" value="NC_004432.1"/>
</dbReference>
<dbReference type="SMR" id="Q8EVN6"/>
<dbReference type="FunCoup" id="Q8EVN6">
    <property type="interactions" value="228"/>
</dbReference>
<dbReference type="STRING" id="272633.gene:10731641"/>
<dbReference type="KEGG" id="mpe:MYPE5240"/>
<dbReference type="eggNOG" id="COG0127">
    <property type="taxonomic scope" value="Bacteria"/>
</dbReference>
<dbReference type="HOGENOM" id="CLU_082080_0_2_14"/>
<dbReference type="InParanoid" id="Q8EVN6"/>
<dbReference type="Proteomes" id="UP000002522">
    <property type="component" value="Chromosome"/>
</dbReference>
<dbReference type="GO" id="GO:0005829">
    <property type="term" value="C:cytosol"/>
    <property type="evidence" value="ECO:0007669"/>
    <property type="project" value="TreeGrafter"/>
</dbReference>
<dbReference type="GO" id="GO:0035870">
    <property type="term" value="F:dITP diphosphatase activity"/>
    <property type="evidence" value="ECO:0007669"/>
    <property type="project" value="RHEA"/>
</dbReference>
<dbReference type="GO" id="GO:0036220">
    <property type="term" value="F:ITP diphosphatase activity"/>
    <property type="evidence" value="ECO:0007669"/>
    <property type="project" value="UniProtKB-EC"/>
</dbReference>
<dbReference type="GO" id="GO:0046872">
    <property type="term" value="F:metal ion binding"/>
    <property type="evidence" value="ECO:0007669"/>
    <property type="project" value="UniProtKB-KW"/>
</dbReference>
<dbReference type="GO" id="GO:0000166">
    <property type="term" value="F:nucleotide binding"/>
    <property type="evidence" value="ECO:0007669"/>
    <property type="project" value="UniProtKB-KW"/>
</dbReference>
<dbReference type="GO" id="GO:0017111">
    <property type="term" value="F:ribonucleoside triphosphate phosphatase activity"/>
    <property type="evidence" value="ECO:0007669"/>
    <property type="project" value="InterPro"/>
</dbReference>
<dbReference type="GO" id="GO:0036222">
    <property type="term" value="F:XTP diphosphatase activity"/>
    <property type="evidence" value="ECO:0007669"/>
    <property type="project" value="RHEA"/>
</dbReference>
<dbReference type="GO" id="GO:0009117">
    <property type="term" value="P:nucleotide metabolic process"/>
    <property type="evidence" value="ECO:0007669"/>
    <property type="project" value="UniProtKB-KW"/>
</dbReference>
<dbReference type="GO" id="GO:0009146">
    <property type="term" value="P:purine nucleoside triphosphate catabolic process"/>
    <property type="evidence" value="ECO:0007669"/>
    <property type="project" value="UniProtKB-UniRule"/>
</dbReference>
<dbReference type="CDD" id="cd00515">
    <property type="entry name" value="HAM1"/>
    <property type="match status" value="1"/>
</dbReference>
<dbReference type="FunFam" id="3.90.950.10:FF:000001">
    <property type="entry name" value="dITP/XTP pyrophosphatase"/>
    <property type="match status" value="1"/>
</dbReference>
<dbReference type="Gene3D" id="3.90.950.10">
    <property type="match status" value="1"/>
</dbReference>
<dbReference type="HAMAP" id="MF_01405">
    <property type="entry name" value="Non_canon_purine_NTPase"/>
    <property type="match status" value="1"/>
</dbReference>
<dbReference type="InterPro" id="IPR020922">
    <property type="entry name" value="dITP/XTP_pyrophosphatase"/>
</dbReference>
<dbReference type="InterPro" id="IPR029001">
    <property type="entry name" value="ITPase-like_fam"/>
</dbReference>
<dbReference type="InterPro" id="IPR002637">
    <property type="entry name" value="RdgB/HAM1"/>
</dbReference>
<dbReference type="NCBIfam" id="TIGR00042">
    <property type="entry name" value="RdgB/HAM1 family non-canonical purine NTP pyrophosphatase"/>
    <property type="match status" value="1"/>
</dbReference>
<dbReference type="PANTHER" id="PTHR11067:SF9">
    <property type="entry name" value="INOSINE TRIPHOSPHATE PYROPHOSPHATASE"/>
    <property type="match status" value="1"/>
</dbReference>
<dbReference type="PANTHER" id="PTHR11067">
    <property type="entry name" value="INOSINE TRIPHOSPHATE PYROPHOSPHATASE/HAM1 PROTEIN"/>
    <property type="match status" value="1"/>
</dbReference>
<dbReference type="Pfam" id="PF01725">
    <property type="entry name" value="Ham1p_like"/>
    <property type="match status" value="1"/>
</dbReference>
<dbReference type="SUPFAM" id="SSF52972">
    <property type="entry name" value="ITPase-like"/>
    <property type="match status" value="1"/>
</dbReference>
<name>IXTPA_MALP2</name>
<comment type="function">
    <text evidence="1">Pyrophosphatase that catalyzes the hydrolysis of nucleoside triphosphates to their monophosphate derivatives, with a high preference for the non-canonical purine nucleotides XTP (xanthosine triphosphate), dITP (deoxyinosine triphosphate) and ITP. Seems to function as a house-cleaning enzyme that removes non-canonical purine nucleotides from the nucleotide pool, thus preventing their incorporation into DNA/RNA and avoiding chromosomal lesions.</text>
</comment>
<comment type="catalytic activity">
    <reaction evidence="1">
        <text>XTP + H2O = XMP + diphosphate + H(+)</text>
        <dbReference type="Rhea" id="RHEA:28610"/>
        <dbReference type="ChEBI" id="CHEBI:15377"/>
        <dbReference type="ChEBI" id="CHEBI:15378"/>
        <dbReference type="ChEBI" id="CHEBI:33019"/>
        <dbReference type="ChEBI" id="CHEBI:57464"/>
        <dbReference type="ChEBI" id="CHEBI:61314"/>
        <dbReference type="EC" id="3.6.1.66"/>
    </reaction>
</comment>
<comment type="catalytic activity">
    <reaction evidence="1">
        <text>dITP + H2O = dIMP + diphosphate + H(+)</text>
        <dbReference type="Rhea" id="RHEA:28342"/>
        <dbReference type="ChEBI" id="CHEBI:15377"/>
        <dbReference type="ChEBI" id="CHEBI:15378"/>
        <dbReference type="ChEBI" id="CHEBI:33019"/>
        <dbReference type="ChEBI" id="CHEBI:61194"/>
        <dbReference type="ChEBI" id="CHEBI:61382"/>
        <dbReference type="EC" id="3.6.1.66"/>
    </reaction>
</comment>
<comment type="catalytic activity">
    <reaction evidence="1">
        <text>ITP + H2O = IMP + diphosphate + H(+)</text>
        <dbReference type="Rhea" id="RHEA:29399"/>
        <dbReference type="ChEBI" id="CHEBI:15377"/>
        <dbReference type="ChEBI" id="CHEBI:15378"/>
        <dbReference type="ChEBI" id="CHEBI:33019"/>
        <dbReference type="ChEBI" id="CHEBI:58053"/>
        <dbReference type="ChEBI" id="CHEBI:61402"/>
        <dbReference type="EC" id="3.6.1.66"/>
    </reaction>
</comment>
<comment type="cofactor">
    <cofactor evidence="1">
        <name>Mg(2+)</name>
        <dbReference type="ChEBI" id="CHEBI:18420"/>
    </cofactor>
    <text evidence="1">Binds 1 Mg(2+) ion per subunit.</text>
</comment>
<comment type="subunit">
    <text evidence="1">Homodimer.</text>
</comment>
<comment type="similarity">
    <text evidence="1">Belongs to the HAM1 NTPase family.</text>
</comment>
<reference key="1">
    <citation type="journal article" date="2002" name="Nucleic Acids Res.">
        <title>The complete genomic sequence of Mycoplasma penetrans, an intracellular bacterial pathogen in humans.</title>
        <authorList>
            <person name="Sasaki Y."/>
            <person name="Ishikawa J."/>
            <person name="Yamashita A."/>
            <person name="Oshima K."/>
            <person name="Kenri T."/>
            <person name="Furuya K."/>
            <person name="Yoshino C."/>
            <person name="Horino A."/>
            <person name="Shiba T."/>
            <person name="Sasaki T."/>
            <person name="Hattori M."/>
        </authorList>
    </citation>
    <scope>NUCLEOTIDE SEQUENCE [LARGE SCALE GENOMIC DNA]</scope>
    <source>
        <strain>HF-2</strain>
    </source>
</reference>
<accession>Q8EVN6</accession>
<organism>
    <name type="scientific">Malacoplasma penetrans (strain HF-2)</name>
    <name type="common">Mycoplasma penetrans</name>
    <dbReference type="NCBI Taxonomy" id="272633"/>
    <lineage>
        <taxon>Bacteria</taxon>
        <taxon>Bacillati</taxon>
        <taxon>Mycoplasmatota</taxon>
        <taxon>Mycoplasmoidales</taxon>
        <taxon>Mycoplasmoidaceae</taxon>
        <taxon>Malacoplasma</taxon>
    </lineage>
</organism>
<protein>
    <recommendedName>
        <fullName evidence="1">dITP/XTP pyrophosphatase</fullName>
        <ecNumber evidence="1">3.6.1.66</ecNumber>
    </recommendedName>
    <alternativeName>
        <fullName evidence="1">Non-canonical purine NTP pyrophosphatase</fullName>
    </alternativeName>
    <alternativeName>
        <fullName evidence="1">Non-standard purine NTP pyrophosphatase</fullName>
    </alternativeName>
    <alternativeName>
        <fullName evidence="1">Nucleoside-triphosphate diphosphatase</fullName>
    </alternativeName>
    <alternativeName>
        <fullName evidence="1">Nucleoside-triphosphate pyrophosphatase</fullName>
        <shortName evidence="1">NTPase</shortName>
    </alternativeName>
</protein>
<feature type="chain" id="PRO_0000178196" description="dITP/XTP pyrophosphatase">
    <location>
        <begin position="1"/>
        <end position="200"/>
    </location>
</feature>
<feature type="active site" description="Proton acceptor" evidence="1">
    <location>
        <position position="71"/>
    </location>
</feature>
<feature type="binding site" evidence="1">
    <location>
        <begin position="7"/>
        <end position="12"/>
    </location>
    <ligand>
        <name>substrate</name>
    </ligand>
</feature>
<feature type="binding site" evidence="1">
    <location>
        <position position="42"/>
    </location>
    <ligand>
        <name>Mg(2+)</name>
        <dbReference type="ChEBI" id="CHEBI:18420"/>
    </ligand>
</feature>
<feature type="binding site" evidence="1">
    <location>
        <position position="71"/>
    </location>
    <ligand>
        <name>Mg(2+)</name>
        <dbReference type="ChEBI" id="CHEBI:18420"/>
    </ligand>
</feature>
<feature type="binding site" evidence="1">
    <location>
        <position position="72"/>
    </location>
    <ligand>
        <name>substrate</name>
    </ligand>
</feature>
<feature type="binding site" evidence="1">
    <location>
        <begin position="156"/>
        <end position="159"/>
    </location>
    <ligand>
        <name>substrate</name>
    </ligand>
</feature>
<feature type="binding site" evidence="1">
    <location>
        <position position="179"/>
    </location>
    <ligand>
        <name>substrate</name>
    </ligand>
</feature>
<feature type="binding site" evidence="1">
    <location>
        <begin position="184"/>
        <end position="185"/>
    </location>
    <ligand>
        <name>substrate</name>
    </ligand>
</feature>